<proteinExistence type="evidence at protein level"/>
<comment type="function">
    <text evidence="5">Component of the mitochondrial ribosome (mitoribosome), a dedicated translation machinery responsible for the synthesis of mitochondrial genome-encoded proteins, including at least some of the essential transmembrane subunits of the mitochondrial respiratory chain. The mitoribosomes are attached to the mitochondrial inner membrane and translation products are cotranslationally integrated into the membrane.</text>
</comment>
<comment type="subunit">
    <text evidence="1 2">Component of the mitochondrial large ribosomal subunit (mt-LSU). Mature N.crassa 74S mitochondrial ribosomes consist of a small (37S) and a large (54S) subunit. The 37S small subunit contains a 16S ribosomal RNA (16S mt-rRNA) and 32 different proteins. The 54S large subunit contains a 23S rRNA (23S mt-rRNA) and 42 different proteins.</text>
</comment>
<comment type="subcellular location">
    <subcellularLocation>
        <location evidence="1 2">Mitochondrion</location>
    </subcellularLocation>
</comment>
<comment type="similarity">
    <text evidence="4">Belongs to the bacterial ribosomal protein bL17 family.</text>
</comment>
<feature type="chain" id="PRO_0000458615" description="Large ribosomal subunit protein bL17m">
    <location>
        <begin position="1"/>
        <end position="193"/>
    </location>
</feature>
<accession>Q1K8C8</accession>
<organism>
    <name type="scientific">Neurospora crassa (strain ATCC 24698 / 74-OR23-1A / CBS 708.71 / DSM 1257 / FGSC 987)</name>
    <dbReference type="NCBI Taxonomy" id="367110"/>
    <lineage>
        <taxon>Eukaryota</taxon>
        <taxon>Fungi</taxon>
        <taxon>Dikarya</taxon>
        <taxon>Ascomycota</taxon>
        <taxon>Pezizomycotina</taxon>
        <taxon>Sordariomycetes</taxon>
        <taxon>Sordariomycetidae</taxon>
        <taxon>Sordariales</taxon>
        <taxon>Sordariaceae</taxon>
        <taxon>Neurospora</taxon>
    </lineage>
</organism>
<sequence>MAGAHVKYRHLSRSSAHRQALLRNLVTSLIKNETIHTTYPKAKEAQRLAEKLITLSKRDTETARRSAQGILYTPDQLLPKLFGEIRERYANRPGGYTRVLRTEPKDQYSQAPSAILELVDGPKDMRFAMTAATVARDREQKTESTDLTKKNMDKVTRFRKDGMRAFEDMVASLRDMKFTAGAINPKEWKKLDR</sequence>
<evidence type="ECO:0000269" key="1">
    <source>
    </source>
</evidence>
<evidence type="ECO:0000269" key="2">
    <source>
    </source>
</evidence>
<evidence type="ECO:0000303" key="3">
    <source>
    </source>
</evidence>
<evidence type="ECO:0000305" key="4"/>
<evidence type="ECO:0000305" key="5">
    <source>
    </source>
</evidence>
<evidence type="ECO:0007744" key="6">
    <source>
        <dbReference type="PDB" id="6YWS"/>
    </source>
</evidence>
<evidence type="ECO:0007744" key="7">
    <source>
        <dbReference type="PDB" id="6YWV"/>
    </source>
</evidence>
<protein>
    <recommendedName>
        <fullName evidence="3">Large ribosomal subunit protein bL17m</fullName>
    </recommendedName>
</protein>
<gene>
    <name type="primary">mrpl8</name>
    <name type="ORF">NCU01023</name>
</gene>
<dbReference type="EMBL" id="CM002240">
    <property type="protein sequence ID" value="EAA32399.2"/>
    <property type="molecule type" value="Genomic_DNA"/>
</dbReference>
<dbReference type="RefSeq" id="XP_961635.2">
    <property type="nucleotide sequence ID" value="XM_956542.3"/>
</dbReference>
<dbReference type="PDB" id="6YWS">
    <property type="method" value="EM"/>
    <property type="resolution" value="2.74 A"/>
    <property type="chains" value="L=1-193"/>
</dbReference>
<dbReference type="PDB" id="6YWV">
    <property type="method" value="EM"/>
    <property type="resolution" value="3.03 A"/>
    <property type="chains" value="L=1-193"/>
</dbReference>
<dbReference type="PDB" id="6YWX">
    <property type="method" value="EM"/>
    <property type="resolution" value="3.10 A"/>
    <property type="chains" value="L=1-193"/>
</dbReference>
<dbReference type="PDBsum" id="6YWS"/>
<dbReference type="PDBsum" id="6YWV"/>
<dbReference type="PDBsum" id="6YWX"/>
<dbReference type="EMDB" id="EMD-10973"/>
<dbReference type="EMDB" id="EMD-10977"/>
<dbReference type="EMDB" id="EMD-10978"/>
<dbReference type="SMR" id="Q1K8C8"/>
<dbReference type="FunCoup" id="Q1K8C8">
    <property type="interactions" value="576"/>
</dbReference>
<dbReference type="STRING" id="367110.Q1K8C8"/>
<dbReference type="PaxDb" id="5141-EFNCRP00000004448"/>
<dbReference type="EnsemblFungi" id="EAA32399">
    <property type="protein sequence ID" value="EAA32399"/>
    <property type="gene ID" value="NCU01023"/>
</dbReference>
<dbReference type="GeneID" id="3877810"/>
<dbReference type="KEGG" id="ncr:NCU01023"/>
<dbReference type="VEuPathDB" id="FungiDB:NCU01023"/>
<dbReference type="HOGENOM" id="CLU_074407_1_2_1"/>
<dbReference type="InParanoid" id="Q1K8C8"/>
<dbReference type="OMA" id="HIQTTYA"/>
<dbReference type="OrthoDB" id="275000at2759"/>
<dbReference type="Proteomes" id="UP000001805">
    <property type="component" value="Chromosome 2, Linkage Group V"/>
</dbReference>
<dbReference type="GO" id="GO:0005762">
    <property type="term" value="C:mitochondrial large ribosomal subunit"/>
    <property type="evidence" value="ECO:0000318"/>
    <property type="project" value="GO_Central"/>
</dbReference>
<dbReference type="GO" id="GO:0003735">
    <property type="term" value="F:structural constituent of ribosome"/>
    <property type="evidence" value="ECO:0000318"/>
    <property type="project" value="GO_Central"/>
</dbReference>
<dbReference type="GO" id="GO:0006412">
    <property type="term" value="P:translation"/>
    <property type="evidence" value="ECO:0007669"/>
    <property type="project" value="InterPro"/>
</dbReference>
<dbReference type="FunFam" id="3.90.1030.10:FF:000005">
    <property type="entry name" value="Probable 50S ribosomal protein L17"/>
    <property type="match status" value="1"/>
</dbReference>
<dbReference type="Gene3D" id="3.90.1030.10">
    <property type="entry name" value="Ribosomal protein L17"/>
    <property type="match status" value="1"/>
</dbReference>
<dbReference type="InterPro" id="IPR000456">
    <property type="entry name" value="Ribosomal_bL17"/>
</dbReference>
<dbReference type="InterPro" id="IPR047859">
    <property type="entry name" value="Ribosomal_bL17_CS"/>
</dbReference>
<dbReference type="InterPro" id="IPR036373">
    <property type="entry name" value="Ribosomal_bL17_sf"/>
</dbReference>
<dbReference type="NCBIfam" id="TIGR00059">
    <property type="entry name" value="L17"/>
    <property type="match status" value="1"/>
</dbReference>
<dbReference type="PANTHER" id="PTHR14413:SF16">
    <property type="entry name" value="LARGE RIBOSOMAL SUBUNIT PROTEIN BL17M"/>
    <property type="match status" value="1"/>
</dbReference>
<dbReference type="PANTHER" id="PTHR14413">
    <property type="entry name" value="RIBOSOMAL PROTEIN L17"/>
    <property type="match status" value="1"/>
</dbReference>
<dbReference type="Pfam" id="PF01196">
    <property type="entry name" value="Ribosomal_L17"/>
    <property type="match status" value="1"/>
</dbReference>
<dbReference type="SUPFAM" id="SSF64263">
    <property type="entry name" value="Prokaryotic ribosomal protein L17"/>
    <property type="match status" value="1"/>
</dbReference>
<dbReference type="PROSITE" id="PS01167">
    <property type="entry name" value="RIBOSOMAL_L17"/>
    <property type="match status" value="1"/>
</dbReference>
<keyword id="KW-0002">3D-structure</keyword>
<keyword id="KW-0496">Mitochondrion</keyword>
<keyword id="KW-1185">Reference proteome</keyword>
<keyword id="KW-0687">Ribonucleoprotein</keyword>
<keyword id="KW-0689">Ribosomal protein</keyword>
<name>RM08_NEUCR</name>
<reference key="1">
    <citation type="journal article" date="2003" name="Nature">
        <title>The genome sequence of the filamentous fungus Neurospora crassa.</title>
        <authorList>
            <person name="Galagan J.E."/>
            <person name="Calvo S.E."/>
            <person name="Borkovich K.A."/>
            <person name="Selker E.U."/>
            <person name="Read N.D."/>
            <person name="Jaffe D.B."/>
            <person name="FitzHugh W."/>
            <person name="Ma L.-J."/>
            <person name="Smirnov S."/>
            <person name="Purcell S."/>
            <person name="Rehman B."/>
            <person name="Elkins T."/>
            <person name="Engels R."/>
            <person name="Wang S."/>
            <person name="Nielsen C.B."/>
            <person name="Butler J."/>
            <person name="Endrizzi M."/>
            <person name="Qui D."/>
            <person name="Ianakiev P."/>
            <person name="Bell-Pedersen D."/>
            <person name="Nelson M.A."/>
            <person name="Werner-Washburne M."/>
            <person name="Selitrennikoff C.P."/>
            <person name="Kinsey J.A."/>
            <person name="Braun E.L."/>
            <person name="Zelter A."/>
            <person name="Schulte U."/>
            <person name="Kothe G.O."/>
            <person name="Jedd G."/>
            <person name="Mewes H.-W."/>
            <person name="Staben C."/>
            <person name="Marcotte E."/>
            <person name="Greenberg D."/>
            <person name="Roy A."/>
            <person name="Foley K."/>
            <person name="Naylor J."/>
            <person name="Stange-Thomann N."/>
            <person name="Barrett R."/>
            <person name="Gnerre S."/>
            <person name="Kamal M."/>
            <person name="Kamvysselis M."/>
            <person name="Mauceli E.W."/>
            <person name="Bielke C."/>
            <person name="Rudd S."/>
            <person name="Frishman D."/>
            <person name="Krystofova S."/>
            <person name="Rasmussen C."/>
            <person name="Metzenberg R.L."/>
            <person name="Perkins D.D."/>
            <person name="Kroken S."/>
            <person name="Cogoni C."/>
            <person name="Macino G."/>
            <person name="Catcheside D.E.A."/>
            <person name="Li W."/>
            <person name="Pratt R.J."/>
            <person name="Osmani S.A."/>
            <person name="DeSouza C.P.C."/>
            <person name="Glass N.L."/>
            <person name="Orbach M.J."/>
            <person name="Berglund J.A."/>
            <person name="Voelker R."/>
            <person name="Yarden O."/>
            <person name="Plamann M."/>
            <person name="Seiler S."/>
            <person name="Dunlap J.C."/>
            <person name="Radford A."/>
            <person name="Aramayo R."/>
            <person name="Natvig D.O."/>
            <person name="Alex L.A."/>
            <person name="Mannhaupt G."/>
            <person name="Ebbole D.J."/>
            <person name="Freitag M."/>
            <person name="Paulsen I."/>
            <person name="Sachs M.S."/>
            <person name="Lander E.S."/>
            <person name="Nusbaum C."/>
            <person name="Birren B.W."/>
        </authorList>
    </citation>
    <scope>NUCLEOTIDE SEQUENCE [LARGE SCALE GENOMIC DNA]</scope>
    <source>
        <strain>ATCC 24698 / 74-OR23-1A / CBS 708.71 / DSM 1257 / FGSC 987</strain>
    </source>
</reference>
<reference key="2">
    <citation type="journal article" date="2006" name="FEMS Microbiol. Lett.">
        <title>Identification and comparative analysis of the large subunit mitochondrial ribosomal proteins of Neurospora crassa.</title>
        <authorList>
            <person name="Gan X."/>
            <person name="Arita K."/>
            <person name="Isono S."/>
            <person name="Kitakawa M."/>
            <person name="Yoshino K."/>
            <person name="Yonezawa K."/>
            <person name="Kato A."/>
            <person name="Inoue H."/>
            <person name="Isono K."/>
        </authorList>
    </citation>
    <scope>IDENTIFICATION IN THE MITOCHONDRIAL RIBOSOMAL LARGE COMPLEX</scope>
    <scope>IDENTIFICATION BY MASS SPECTROMETRY</scope>
</reference>
<reference evidence="6 7" key="3">
    <citation type="journal article" date="2020" name="Nat. Commun.">
        <title>Analysis of translating mitoribosome reveals functional characteristics of translation in mitochondria of fungi.</title>
        <authorList>
            <person name="Itoh Y."/>
            <person name="Naschberger A."/>
            <person name="Mortezaei N."/>
            <person name="Herrmann J.M."/>
            <person name="Amunts A."/>
        </authorList>
    </citation>
    <scope>STRUCTURE BY ELECTRON MICROSCOPY (2.74 ANGSTROMS)</scope>
</reference>